<feature type="chain" id="PRO_1000196507" description="Small ribosomal subunit protein bS18">
    <location>
        <begin position="1"/>
        <end position="105"/>
    </location>
</feature>
<feature type="region of interest" description="Disordered" evidence="2">
    <location>
        <begin position="1"/>
        <end position="34"/>
    </location>
</feature>
<feature type="compositionally biased region" description="Polar residues" evidence="2">
    <location>
        <begin position="1"/>
        <end position="10"/>
    </location>
</feature>
<feature type="compositionally biased region" description="Low complexity" evidence="2">
    <location>
        <begin position="12"/>
        <end position="25"/>
    </location>
</feature>
<name>RS18_ACIC5</name>
<comment type="function">
    <text evidence="1">Binds as a heterodimer with protein bS6 to the central domain of the 16S rRNA, where it helps stabilize the platform of the 30S subunit.</text>
</comment>
<comment type="subunit">
    <text evidence="1">Part of the 30S ribosomal subunit. Forms a tight heterodimer with protein bS6.</text>
</comment>
<comment type="similarity">
    <text evidence="1">Belongs to the bacterial ribosomal protein bS18 family.</text>
</comment>
<organism>
    <name type="scientific">Acidobacterium capsulatum (strain ATCC 51196 / DSM 11244 / BCRC 80197 / JCM 7670 / NBRC 15755 / NCIMB 13165 / 161)</name>
    <dbReference type="NCBI Taxonomy" id="240015"/>
    <lineage>
        <taxon>Bacteria</taxon>
        <taxon>Pseudomonadati</taxon>
        <taxon>Acidobacteriota</taxon>
        <taxon>Terriglobia</taxon>
        <taxon>Terriglobales</taxon>
        <taxon>Acidobacteriaceae</taxon>
        <taxon>Acidobacterium</taxon>
    </lineage>
</organism>
<gene>
    <name evidence="1" type="primary">rpsR</name>
    <name type="ordered locus">ACP_2065</name>
</gene>
<sequence length="105" mass="11804">MAEETNQQAPESGASSSQPTSRPSGPRGGSGGRKFFRRKKVCKFCTEKIDAIPYRDVRLLQQFVAERGKIVPRRLTGVCTTHQRRLTRAIKQARNIALLPFAARY</sequence>
<dbReference type="EMBL" id="CP001472">
    <property type="protein sequence ID" value="ACO31697.1"/>
    <property type="molecule type" value="Genomic_DNA"/>
</dbReference>
<dbReference type="RefSeq" id="WP_015897167.1">
    <property type="nucleotide sequence ID" value="NC_012483.1"/>
</dbReference>
<dbReference type="SMR" id="C1F903"/>
<dbReference type="FunCoup" id="C1F903">
    <property type="interactions" value="576"/>
</dbReference>
<dbReference type="STRING" id="240015.ACP_2065"/>
<dbReference type="KEGG" id="aca:ACP_2065"/>
<dbReference type="eggNOG" id="COG0238">
    <property type="taxonomic scope" value="Bacteria"/>
</dbReference>
<dbReference type="HOGENOM" id="CLU_148710_2_2_0"/>
<dbReference type="InParanoid" id="C1F903"/>
<dbReference type="OrthoDB" id="9812008at2"/>
<dbReference type="Proteomes" id="UP000002207">
    <property type="component" value="Chromosome"/>
</dbReference>
<dbReference type="GO" id="GO:0022627">
    <property type="term" value="C:cytosolic small ribosomal subunit"/>
    <property type="evidence" value="ECO:0007669"/>
    <property type="project" value="TreeGrafter"/>
</dbReference>
<dbReference type="GO" id="GO:0070181">
    <property type="term" value="F:small ribosomal subunit rRNA binding"/>
    <property type="evidence" value="ECO:0007669"/>
    <property type="project" value="TreeGrafter"/>
</dbReference>
<dbReference type="GO" id="GO:0003735">
    <property type="term" value="F:structural constituent of ribosome"/>
    <property type="evidence" value="ECO:0007669"/>
    <property type="project" value="InterPro"/>
</dbReference>
<dbReference type="GO" id="GO:0006412">
    <property type="term" value="P:translation"/>
    <property type="evidence" value="ECO:0007669"/>
    <property type="project" value="UniProtKB-UniRule"/>
</dbReference>
<dbReference type="Gene3D" id="4.10.640.10">
    <property type="entry name" value="Ribosomal protein S18"/>
    <property type="match status" value="1"/>
</dbReference>
<dbReference type="HAMAP" id="MF_00270">
    <property type="entry name" value="Ribosomal_bS18"/>
    <property type="match status" value="1"/>
</dbReference>
<dbReference type="InterPro" id="IPR001648">
    <property type="entry name" value="Ribosomal_bS18"/>
</dbReference>
<dbReference type="InterPro" id="IPR036870">
    <property type="entry name" value="Ribosomal_bS18_sf"/>
</dbReference>
<dbReference type="NCBIfam" id="TIGR00165">
    <property type="entry name" value="S18"/>
    <property type="match status" value="1"/>
</dbReference>
<dbReference type="PANTHER" id="PTHR13479">
    <property type="entry name" value="30S RIBOSOMAL PROTEIN S18"/>
    <property type="match status" value="1"/>
</dbReference>
<dbReference type="PANTHER" id="PTHR13479:SF40">
    <property type="entry name" value="SMALL RIBOSOMAL SUBUNIT PROTEIN BS18M"/>
    <property type="match status" value="1"/>
</dbReference>
<dbReference type="Pfam" id="PF01084">
    <property type="entry name" value="Ribosomal_S18"/>
    <property type="match status" value="1"/>
</dbReference>
<dbReference type="PRINTS" id="PR00974">
    <property type="entry name" value="RIBOSOMALS18"/>
</dbReference>
<dbReference type="SUPFAM" id="SSF46911">
    <property type="entry name" value="Ribosomal protein S18"/>
    <property type="match status" value="1"/>
</dbReference>
<reference key="1">
    <citation type="journal article" date="2009" name="Appl. Environ. Microbiol.">
        <title>Three genomes from the phylum Acidobacteria provide insight into the lifestyles of these microorganisms in soils.</title>
        <authorList>
            <person name="Ward N.L."/>
            <person name="Challacombe J.F."/>
            <person name="Janssen P.H."/>
            <person name="Henrissat B."/>
            <person name="Coutinho P.M."/>
            <person name="Wu M."/>
            <person name="Xie G."/>
            <person name="Haft D.H."/>
            <person name="Sait M."/>
            <person name="Badger J."/>
            <person name="Barabote R.D."/>
            <person name="Bradley B."/>
            <person name="Brettin T.S."/>
            <person name="Brinkac L.M."/>
            <person name="Bruce D."/>
            <person name="Creasy T."/>
            <person name="Daugherty S.C."/>
            <person name="Davidsen T.M."/>
            <person name="DeBoy R.T."/>
            <person name="Detter J.C."/>
            <person name="Dodson R.J."/>
            <person name="Durkin A.S."/>
            <person name="Ganapathy A."/>
            <person name="Gwinn-Giglio M."/>
            <person name="Han C.S."/>
            <person name="Khouri H."/>
            <person name="Kiss H."/>
            <person name="Kothari S.P."/>
            <person name="Madupu R."/>
            <person name="Nelson K.E."/>
            <person name="Nelson W.C."/>
            <person name="Paulsen I."/>
            <person name="Penn K."/>
            <person name="Ren Q."/>
            <person name="Rosovitz M.J."/>
            <person name="Selengut J.D."/>
            <person name="Shrivastava S."/>
            <person name="Sullivan S.A."/>
            <person name="Tapia R."/>
            <person name="Thompson L.S."/>
            <person name="Watkins K.L."/>
            <person name="Yang Q."/>
            <person name="Yu C."/>
            <person name="Zafar N."/>
            <person name="Zhou L."/>
            <person name="Kuske C.R."/>
        </authorList>
    </citation>
    <scope>NUCLEOTIDE SEQUENCE [LARGE SCALE GENOMIC DNA]</scope>
    <source>
        <strain>ATCC 51196 / DSM 11244 / BCRC 80197 / JCM 7670 / NBRC 15755 / NCIMB 13165 / 161</strain>
    </source>
</reference>
<evidence type="ECO:0000255" key="1">
    <source>
        <dbReference type="HAMAP-Rule" id="MF_00270"/>
    </source>
</evidence>
<evidence type="ECO:0000256" key="2">
    <source>
        <dbReference type="SAM" id="MobiDB-lite"/>
    </source>
</evidence>
<evidence type="ECO:0000305" key="3"/>
<proteinExistence type="inferred from homology"/>
<protein>
    <recommendedName>
        <fullName evidence="1">Small ribosomal subunit protein bS18</fullName>
    </recommendedName>
    <alternativeName>
        <fullName evidence="3">30S ribosomal protein S18</fullName>
    </alternativeName>
</protein>
<keyword id="KW-1185">Reference proteome</keyword>
<keyword id="KW-0687">Ribonucleoprotein</keyword>
<keyword id="KW-0689">Ribosomal protein</keyword>
<keyword id="KW-0694">RNA-binding</keyword>
<keyword id="KW-0699">rRNA-binding</keyword>
<accession>C1F903</accession>